<sequence length="522" mass="59691">MATVREKAVALDLCATYSPSQRPPGPNGSHRPFRATYIWSSIIQVLYTQVEVKKRRHHLKYHHDCFIGSEAVDVVFAHLVQHKYFGDMDIPRSKVVRVCQALMDCKVFEPIVTACMFGREKKRTVFEDSSCSLYRFLNSSNLLGVQVEKSNGRCTPQRPKHSSFQSASLQSPSLEDLWDNLSLTPADPTHINLTSNLPPKVVAEVWQEQTIRRLLQLVDLPLLDSLLEYTPVAPRIPNVKEEDHNLTSNYLDREILKAFSDAQADEWVSAAVDCLDFLPDHMVVDVSRNLPEQQAPDSKWKLLLFDTIGKHYSQNRAPLLRNQLFDIHTGIAELLVNGKTEPALEATQLCLKLLDSPSREEFRRLLYFMALAADPSEFRLNEETDNRMTVKRMFCRAIVNNKSLSKGKCDLLVLFILDHHKDVFKIPGSLHKMVSDKLVAIQQGTDPDRDTGYTFCQRVDKREFDSAAQNNTRTELCALLKTIYENNSLSPKEKKRLLGQFYKSHPETFIQYFGDRVSSVYT</sequence>
<gene>
    <name type="primary">depdc7</name>
</gene>
<dbReference type="EMBL" id="BC077330">
    <property type="protein sequence ID" value="AAH77330.1"/>
    <property type="molecule type" value="mRNA"/>
</dbReference>
<dbReference type="RefSeq" id="NP_001086703.1">
    <property type="nucleotide sequence ID" value="NM_001093234.1"/>
</dbReference>
<dbReference type="SMR" id="Q6AZT6"/>
<dbReference type="BioGRID" id="103398">
    <property type="interactions" value="2"/>
</dbReference>
<dbReference type="IntAct" id="Q6AZT6">
    <property type="interactions" value="1"/>
</dbReference>
<dbReference type="DNASU" id="446538"/>
<dbReference type="GeneID" id="446538"/>
<dbReference type="KEGG" id="xla:446538"/>
<dbReference type="AGR" id="Xenbase:XB-GENE-1010073"/>
<dbReference type="CTD" id="446538"/>
<dbReference type="Xenbase" id="XB-GENE-1010073">
    <property type="gene designation" value="depdc7.L"/>
</dbReference>
<dbReference type="OrthoDB" id="276323at2759"/>
<dbReference type="Proteomes" id="UP000186698">
    <property type="component" value="Chromosome 4L"/>
</dbReference>
<dbReference type="Bgee" id="446538">
    <property type="expression patterns" value="Expressed in egg cell and 16 other cell types or tissues"/>
</dbReference>
<dbReference type="GO" id="GO:0035556">
    <property type="term" value="P:intracellular signal transduction"/>
    <property type="evidence" value="ECO:0007669"/>
    <property type="project" value="InterPro"/>
</dbReference>
<dbReference type="CDD" id="cd04446">
    <property type="entry name" value="DEP_DEPDC4"/>
    <property type="match status" value="1"/>
</dbReference>
<dbReference type="CDD" id="cd04405">
    <property type="entry name" value="RhoGAP_BRCC3-like"/>
    <property type="match status" value="1"/>
</dbReference>
<dbReference type="Gene3D" id="1.10.10.10">
    <property type="entry name" value="Winged helix-like DNA-binding domain superfamily/Winged helix DNA-binding domain"/>
    <property type="match status" value="1"/>
</dbReference>
<dbReference type="InterPro" id="IPR000591">
    <property type="entry name" value="DEP_dom"/>
</dbReference>
<dbReference type="InterPro" id="IPR036388">
    <property type="entry name" value="WH-like_DNA-bd_sf"/>
</dbReference>
<dbReference type="InterPro" id="IPR036390">
    <property type="entry name" value="WH_DNA-bd_sf"/>
</dbReference>
<dbReference type="PANTHER" id="PTHR16206">
    <property type="entry name" value="DEP DOMAIN-CONTAINING"/>
    <property type="match status" value="1"/>
</dbReference>
<dbReference type="PANTHER" id="PTHR16206:SF9">
    <property type="entry name" value="DEP DOMAIN-CONTAINING PROTEIN 7"/>
    <property type="match status" value="1"/>
</dbReference>
<dbReference type="Pfam" id="PF00610">
    <property type="entry name" value="DEP"/>
    <property type="match status" value="1"/>
</dbReference>
<dbReference type="SMART" id="SM00049">
    <property type="entry name" value="DEP"/>
    <property type="match status" value="1"/>
</dbReference>
<dbReference type="SUPFAM" id="SSF46785">
    <property type="entry name" value="Winged helix' DNA-binding domain"/>
    <property type="match status" value="1"/>
</dbReference>
<keyword id="KW-1185">Reference proteome</keyword>
<reference key="1">
    <citation type="submission" date="2004-07" db="EMBL/GenBank/DDBJ databases">
        <authorList>
            <consortium name="NIH - Xenopus Gene Collection (XGC) project"/>
        </authorList>
    </citation>
    <scope>NUCLEOTIDE SEQUENCE [LARGE SCALE MRNA]</scope>
    <source>
        <tissue>Ovary</tissue>
    </source>
</reference>
<accession>Q6AZT6</accession>
<feature type="chain" id="PRO_0000307743" description="DEP domain-containing protein 7">
    <location>
        <begin position="1"/>
        <end position="522"/>
    </location>
</feature>
<feature type="domain" description="DEP">
    <location>
        <begin position="46"/>
        <end position="138"/>
    </location>
</feature>
<proteinExistence type="evidence at transcript level"/>
<name>DEPD7_XENLA</name>
<evidence type="ECO:0000305" key="1"/>
<protein>
    <recommendedName>
        <fullName>DEP domain-containing protein 7</fullName>
    </recommendedName>
</protein>
<organism>
    <name type="scientific">Xenopus laevis</name>
    <name type="common">African clawed frog</name>
    <dbReference type="NCBI Taxonomy" id="8355"/>
    <lineage>
        <taxon>Eukaryota</taxon>
        <taxon>Metazoa</taxon>
        <taxon>Chordata</taxon>
        <taxon>Craniata</taxon>
        <taxon>Vertebrata</taxon>
        <taxon>Euteleostomi</taxon>
        <taxon>Amphibia</taxon>
        <taxon>Batrachia</taxon>
        <taxon>Anura</taxon>
        <taxon>Pipoidea</taxon>
        <taxon>Pipidae</taxon>
        <taxon>Xenopodinae</taxon>
        <taxon>Xenopus</taxon>
        <taxon>Xenopus</taxon>
    </lineage>
</organism>
<comment type="similarity">
    <text evidence="1">Belongs to the DEPDC7 family.</text>
</comment>